<name>YPA2_LEGPN</name>
<organism>
    <name type="scientific">Legionella pneumophila</name>
    <dbReference type="NCBI Taxonomy" id="446"/>
    <lineage>
        <taxon>Bacteria</taxon>
        <taxon>Pseudomonadati</taxon>
        <taxon>Pseudomonadota</taxon>
        <taxon>Gammaproteobacteria</taxon>
        <taxon>Legionellales</taxon>
        <taxon>Legionellaceae</taxon>
        <taxon>Legionella</taxon>
    </lineage>
</organism>
<proteinExistence type="predicted"/>
<reference key="1">
    <citation type="journal article" date="1991" name="Mol. Microbiol.">
        <title>Characterization of a Legionella pneumophila gene encoding a lipoprotein antigen.</title>
        <authorList>
            <person name="Engleberg N.C."/>
            <person name="Howe D.C."/>
            <person name="Rogers J.E."/>
            <person name="Arroyo J."/>
            <person name="Eisenstein B.I."/>
        </authorList>
    </citation>
    <scope>NUCLEOTIDE SEQUENCE [GENOMIC DNA]</scope>
    <source>
        <strain>AA100 / Serogroup 1</strain>
    </source>
</reference>
<feature type="chain" id="PRO_0000066390" description="Uncharacterized protein in pal 3'region">
    <location>
        <begin position="1"/>
        <end position="201" status="greater than"/>
    </location>
</feature>
<feature type="region of interest" description="Disordered" evidence="1">
    <location>
        <begin position="46"/>
        <end position="80"/>
    </location>
</feature>
<feature type="region of interest" description="Disordered" evidence="1">
    <location>
        <begin position="143"/>
        <end position="201"/>
    </location>
</feature>
<feature type="compositionally biased region" description="Polar residues" evidence="1">
    <location>
        <begin position="64"/>
        <end position="78"/>
    </location>
</feature>
<feature type="compositionally biased region" description="Polar residues" evidence="1">
    <location>
        <begin position="143"/>
        <end position="167"/>
    </location>
</feature>
<feature type="non-terminal residue">
    <location>
        <position position="201"/>
    </location>
</feature>
<evidence type="ECO:0000256" key="1">
    <source>
        <dbReference type="SAM" id="MobiDB-lite"/>
    </source>
</evidence>
<dbReference type="EMBL" id="X60543">
    <property type="status" value="NOT_ANNOTATED_CDS"/>
    <property type="molecule type" value="Genomic_DNA"/>
</dbReference>
<dbReference type="SMR" id="P26881"/>
<dbReference type="STRING" id="91892.BIZ52_10020"/>
<dbReference type="eggNOG" id="COG1729">
    <property type="taxonomic scope" value="Bacteria"/>
</dbReference>
<dbReference type="GO" id="GO:0070206">
    <property type="term" value="P:protein trimerization"/>
    <property type="evidence" value="ECO:0007669"/>
    <property type="project" value="InterPro"/>
</dbReference>
<dbReference type="Gene3D" id="1.20.5.110">
    <property type="match status" value="1"/>
</dbReference>
<dbReference type="InterPro" id="IPR032519">
    <property type="entry name" value="YbgF_tri"/>
</dbReference>
<dbReference type="Pfam" id="PF16331">
    <property type="entry name" value="TolA_bind_tri"/>
    <property type="match status" value="1"/>
</dbReference>
<sequence length="201" mass="22179">MINRKKSIITLCFVLMLPFASWAEAPVIDDSENFAMIDRQEEYDAPLVNPKYDNPQIESAELDGSQNDNYSTDTSQSYDEPALVKEDRSTISDNAKLIDKIQQLQKEIQELRGQLEVQAHDLKLLQQQQVAFYKDLDSRLSNSSTSAKTIQNDKPATDVSLGSNSPATLKAASPQIKRGPSTGPSNSKPQPVIAVSRANPA</sequence>
<accession>P26881</accession>
<protein>
    <recommendedName>
        <fullName>Uncharacterized protein in pal 3'region</fullName>
    </recommendedName>
    <alternativeName>
        <fullName>ORFD</fullName>
    </alternativeName>
</protein>